<gene>
    <name evidence="1" type="primary">dnaK</name>
    <name type="ordered locus">SA1409</name>
</gene>
<accession>P99110</accession>
<accession>Q99TR7</accession>
<comment type="function">
    <text evidence="1">Acts as a chaperone.</text>
</comment>
<comment type="induction">
    <text evidence="1">By stress conditions e.g. heat shock.</text>
</comment>
<comment type="similarity">
    <text evidence="1">Belongs to the heat shock protein 70 family.</text>
</comment>
<protein>
    <recommendedName>
        <fullName evidence="1">Chaperone protein DnaK</fullName>
    </recommendedName>
    <alternativeName>
        <fullName evidence="1">HSP70</fullName>
    </alternativeName>
    <alternativeName>
        <fullName evidence="1">Heat shock 70 kDa protein</fullName>
    </alternativeName>
    <alternativeName>
        <fullName evidence="1">Heat shock protein 70</fullName>
    </alternativeName>
</protein>
<keyword id="KW-0067">ATP-binding</keyword>
<keyword id="KW-0143">Chaperone</keyword>
<keyword id="KW-0547">Nucleotide-binding</keyword>
<keyword id="KW-0597">Phosphoprotein</keyword>
<keyword id="KW-0346">Stress response</keyword>
<feature type="chain" id="PRO_0000078538" description="Chaperone protein DnaK">
    <location>
        <begin position="1"/>
        <end position="610"/>
    </location>
</feature>
<feature type="region of interest" description="Disordered" evidence="2">
    <location>
        <begin position="525"/>
        <end position="544"/>
    </location>
</feature>
<feature type="region of interest" description="Disordered" evidence="2">
    <location>
        <begin position="576"/>
        <end position="610"/>
    </location>
</feature>
<feature type="compositionally biased region" description="Basic and acidic residues" evidence="2">
    <location>
        <begin position="529"/>
        <end position="542"/>
    </location>
</feature>
<feature type="compositionally biased region" description="Low complexity" evidence="2">
    <location>
        <begin position="576"/>
        <end position="592"/>
    </location>
</feature>
<feature type="compositionally biased region" description="Basic and acidic residues" evidence="2">
    <location>
        <begin position="599"/>
        <end position="610"/>
    </location>
</feature>
<feature type="modified residue" description="Phosphothreonine; by autocatalysis" evidence="1">
    <location>
        <position position="173"/>
    </location>
</feature>
<organism>
    <name type="scientific">Staphylococcus aureus (strain N315)</name>
    <dbReference type="NCBI Taxonomy" id="158879"/>
    <lineage>
        <taxon>Bacteria</taxon>
        <taxon>Bacillati</taxon>
        <taxon>Bacillota</taxon>
        <taxon>Bacilli</taxon>
        <taxon>Bacillales</taxon>
        <taxon>Staphylococcaceae</taxon>
        <taxon>Staphylococcus</taxon>
    </lineage>
</organism>
<reference key="1">
    <citation type="journal article" date="2001" name="Lancet">
        <title>Whole genome sequencing of meticillin-resistant Staphylococcus aureus.</title>
        <authorList>
            <person name="Kuroda M."/>
            <person name="Ohta T."/>
            <person name="Uchiyama I."/>
            <person name="Baba T."/>
            <person name="Yuzawa H."/>
            <person name="Kobayashi I."/>
            <person name="Cui L."/>
            <person name="Oguchi A."/>
            <person name="Aoki K."/>
            <person name="Nagai Y."/>
            <person name="Lian J.-Q."/>
            <person name="Ito T."/>
            <person name="Kanamori M."/>
            <person name="Matsumaru H."/>
            <person name="Maruyama A."/>
            <person name="Murakami H."/>
            <person name="Hosoyama A."/>
            <person name="Mizutani-Ui Y."/>
            <person name="Takahashi N.K."/>
            <person name="Sawano T."/>
            <person name="Inoue R."/>
            <person name="Kaito C."/>
            <person name="Sekimizu K."/>
            <person name="Hirakawa H."/>
            <person name="Kuhara S."/>
            <person name="Goto S."/>
            <person name="Yabuzaki J."/>
            <person name="Kanehisa M."/>
            <person name="Yamashita A."/>
            <person name="Oshima K."/>
            <person name="Furuya K."/>
            <person name="Yoshino C."/>
            <person name="Shiba T."/>
            <person name="Hattori M."/>
            <person name="Ogasawara N."/>
            <person name="Hayashi H."/>
            <person name="Hiramatsu K."/>
        </authorList>
    </citation>
    <scope>NUCLEOTIDE SEQUENCE [LARGE SCALE GENOMIC DNA]</scope>
    <source>
        <strain>N315</strain>
    </source>
</reference>
<reference key="2">
    <citation type="journal article" date="2005" name="J. Microbiol. Methods">
        <title>Correlation of proteomic and transcriptomic profiles of Staphylococcus aureus during the post-exponential phase of growth.</title>
        <authorList>
            <person name="Scherl A."/>
            <person name="Francois P."/>
            <person name="Bento M."/>
            <person name="Deshusses J.M."/>
            <person name="Charbonnier Y."/>
            <person name="Converset V."/>
            <person name="Huyghe A."/>
            <person name="Walter N."/>
            <person name="Hoogland C."/>
            <person name="Appel R.D."/>
            <person name="Sanchez J.-C."/>
            <person name="Zimmermann-Ivol C.G."/>
            <person name="Corthals G.L."/>
            <person name="Hochstrasser D.F."/>
            <person name="Schrenzel J."/>
        </authorList>
    </citation>
    <scope>IDENTIFICATION BY MASS SPECTROMETRY</scope>
    <source>
        <strain>N315</strain>
    </source>
</reference>
<reference key="3">
    <citation type="submission" date="2007-10" db="UniProtKB">
        <title>Shotgun proteomic analysis of total and membrane protein extracts of S. aureus strain N315.</title>
        <authorList>
            <person name="Vaezzadeh A.R."/>
            <person name="Deshusses J."/>
            <person name="Lescuyer P."/>
            <person name="Hochstrasser D.F."/>
        </authorList>
    </citation>
    <scope>IDENTIFICATION BY MASS SPECTROMETRY [LARGE SCALE ANALYSIS]</scope>
    <source>
        <strain>N315</strain>
    </source>
</reference>
<name>DNAK_STAAN</name>
<dbReference type="EMBL" id="BA000018">
    <property type="protein sequence ID" value="BAB42672.1"/>
    <property type="molecule type" value="Genomic_DNA"/>
</dbReference>
<dbReference type="PIR" id="C89939">
    <property type="entry name" value="C89939"/>
</dbReference>
<dbReference type="RefSeq" id="WP_000034716.1">
    <property type="nucleotide sequence ID" value="NC_002745.2"/>
</dbReference>
<dbReference type="SMR" id="P99110"/>
<dbReference type="EnsemblBacteria" id="BAB42672">
    <property type="protein sequence ID" value="BAB42672"/>
    <property type="gene ID" value="BAB42672"/>
</dbReference>
<dbReference type="KEGG" id="sau:SA1409"/>
<dbReference type="HOGENOM" id="CLU_005965_2_4_9"/>
<dbReference type="GO" id="GO:0005524">
    <property type="term" value="F:ATP binding"/>
    <property type="evidence" value="ECO:0007669"/>
    <property type="project" value="UniProtKB-UniRule"/>
</dbReference>
<dbReference type="GO" id="GO:0140662">
    <property type="term" value="F:ATP-dependent protein folding chaperone"/>
    <property type="evidence" value="ECO:0007669"/>
    <property type="project" value="InterPro"/>
</dbReference>
<dbReference type="GO" id="GO:0051082">
    <property type="term" value="F:unfolded protein binding"/>
    <property type="evidence" value="ECO:0007669"/>
    <property type="project" value="InterPro"/>
</dbReference>
<dbReference type="CDD" id="cd10234">
    <property type="entry name" value="ASKHA_NBD_HSP70_DnaK-like"/>
    <property type="match status" value="1"/>
</dbReference>
<dbReference type="FunFam" id="2.60.34.10:FF:000014">
    <property type="entry name" value="Chaperone protein DnaK HSP70"/>
    <property type="match status" value="1"/>
</dbReference>
<dbReference type="FunFam" id="1.20.1270.10:FF:000001">
    <property type="entry name" value="Molecular chaperone DnaK"/>
    <property type="match status" value="1"/>
</dbReference>
<dbReference type="FunFam" id="3.30.420.40:FF:000071">
    <property type="entry name" value="Molecular chaperone DnaK"/>
    <property type="match status" value="1"/>
</dbReference>
<dbReference type="FunFam" id="3.90.640.10:FF:000003">
    <property type="entry name" value="Molecular chaperone DnaK"/>
    <property type="match status" value="1"/>
</dbReference>
<dbReference type="Gene3D" id="1.20.1270.10">
    <property type="match status" value="1"/>
</dbReference>
<dbReference type="Gene3D" id="3.30.420.40">
    <property type="match status" value="2"/>
</dbReference>
<dbReference type="Gene3D" id="3.90.640.10">
    <property type="entry name" value="Actin, Chain A, domain 4"/>
    <property type="match status" value="1"/>
</dbReference>
<dbReference type="Gene3D" id="2.60.34.10">
    <property type="entry name" value="Substrate Binding Domain Of DNAk, Chain A, domain 1"/>
    <property type="match status" value="1"/>
</dbReference>
<dbReference type="HAMAP" id="MF_00332">
    <property type="entry name" value="DnaK"/>
    <property type="match status" value="1"/>
</dbReference>
<dbReference type="InterPro" id="IPR043129">
    <property type="entry name" value="ATPase_NBD"/>
</dbReference>
<dbReference type="InterPro" id="IPR012725">
    <property type="entry name" value="Chaperone_DnaK"/>
</dbReference>
<dbReference type="InterPro" id="IPR018181">
    <property type="entry name" value="Heat_shock_70_CS"/>
</dbReference>
<dbReference type="InterPro" id="IPR029048">
    <property type="entry name" value="HSP70_C_sf"/>
</dbReference>
<dbReference type="InterPro" id="IPR029047">
    <property type="entry name" value="HSP70_peptide-bd_sf"/>
</dbReference>
<dbReference type="InterPro" id="IPR013126">
    <property type="entry name" value="Hsp_70_fam"/>
</dbReference>
<dbReference type="NCBIfam" id="NF001413">
    <property type="entry name" value="PRK00290.1"/>
    <property type="match status" value="1"/>
</dbReference>
<dbReference type="NCBIfam" id="TIGR02350">
    <property type="entry name" value="prok_dnaK"/>
    <property type="match status" value="1"/>
</dbReference>
<dbReference type="PANTHER" id="PTHR19375">
    <property type="entry name" value="HEAT SHOCK PROTEIN 70KDA"/>
    <property type="match status" value="1"/>
</dbReference>
<dbReference type="Pfam" id="PF00012">
    <property type="entry name" value="HSP70"/>
    <property type="match status" value="1"/>
</dbReference>
<dbReference type="PRINTS" id="PR00301">
    <property type="entry name" value="HEATSHOCK70"/>
</dbReference>
<dbReference type="SUPFAM" id="SSF53067">
    <property type="entry name" value="Actin-like ATPase domain"/>
    <property type="match status" value="2"/>
</dbReference>
<dbReference type="SUPFAM" id="SSF100934">
    <property type="entry name" value="Heat shock protein 70kD (HSP70), C-terminal subdomain"/>
    <property type="match status" value="1"/>
</dbReference>
<dbReference type="SUPFAM" id="SSF100920">
    <property type="entry name" value="Heat shock protein 70kD (HSP70), peptide-binding domain"/>
    <property type="match status" value="1"/>
</dbReference>
<dbReference type="PROSITE" id="PS00297">
    <property type="entry name" value="HSP70_1"/>
    <property type="match status" value="1"/>
</dbReference>
<dbReference type="PROSITE" id="PS00329">
    <property type="entry name" value="HSP70_2"/>
    <property type="match status" value="1"/>
</dbReference>
<dbReference type="PROSITE" id="PS01036">
    <property type="entry name" value="HSP70_3"/>
    <property type="match status" value="1"/>
</dbReference>
<proteinExistence type="evidence at protein level"/>
<sequence>MSKIIGIDLGTTNSCVTVLEGDEPKVIQNPEGSRTTPSVVAFKNGETQVGEVAKRQAITNPNTVQSIKRHMGTDYKVDIEGKSYTPQEISAMILQNLKNTAESYLGEKVDKAVITVPAYFNDAERQATKDAGKIAGLEVERIINEPTAAALAYGLDKTDKDEKVLVFDLGGGTFDVSILELGDGVFEVLSTAGDNKLGGDDFDQVIIDYLVAEFKKENGVDLSQDKMALQRLKDAAEKAKKDLSGVSQTQISLPFISAGENGPLHLEVNLTRSKFEELSDSLIRRTMEPTRQAMKDAGLTNSDIDEVILVGGSTRIPAVQEAVKKEIGKEPNKGVNPDEVVAMGAAIQGGVITGDVKDVVLLDVTPLSLGIEILGGRMNTLIERNTTIPTSKSQIYSTAVDNQPSVDVHVLQGERPMAADNKTLGRFQLTDIPPAERGKPQIEVTFDIDKNGIVNVTAKDLGTNKEQRITIQSSSSLSDEEIDRMVKDAEVNAEADKKRREEVDLRNEADSLVFQVEKTLTDLGENIGEEDKKSAEEKKDALKTALEGQDIEDIKSKKEELEKVIQELSAKVYEQAAQQQQQAQGANAGQNNDSTVEDAEFKEVKDDDKK</sequence>
<evidence type="ECO:0000255" key="1">
    <source>
        <dbReference type="HAMAP-Rule" id="MF_00332"/>
    </source>
</evidence>
<evidence type="ECO:0000256" key="2">
    <source>
        <dbReference type="SAM" id="MobiDB-lite"/>
    </source>
</evidence>